<proteinExistence type="predicted"/>
<keyword id="KW-0472">Membrane</keyword>
<keyword id="KW-1185">Reference proteome</keyword>
<keyword id="KW-0812">Transmembrane</keyword>
<keyword id="KW-1133">Transmembrane helix</keyword>
<sequence>MVFEDVFVFFYIGLKNKFLFFIFYFLFFFIFFTVFGNLNFLGNEGLKCFYIVI</sequence>
<name>Y5966_DICDI</name>
<evidence type="ECO:0000255" key="1"/>
<evidence type="ECO:0000305" key="2"/>
<protein>
    <recommendedName>
        <fullName>Uncharacterized transmembrane protein DDB_G0288365</fullName>
    </recommendedName>
</protein>
<dbReference type="EMBL" id="AAFI02000111">
    <property type="protein sequence ID" value="EAL63279.1"/>
    <property type="molecule type" value="Genomic_DNA"/>
</dbReference>
<dbReference type="RefSeq" id="XP_636777.1">
    <property type="nucleotide sequence ID" value="XM_631685.1"/>
</dbReference>
<dbReference type="PaxDb" id="44689-DDB0215966"/>
<dbReference type="EnsemblProtists" id="EAL63279">
    <property type="protein sequence ID" value="EAL63279"/>
    <property type="gene ID" value="DDB_G0288365"/>
</dbReference>
<dbReference type="GeneID" id="8626580"/>
<dbReference type="KEGG" id="ddi:DDB_G0288365"/>
<dbReference type="HOGENOM" id="CLU_3072692_0_0_1"/>
<dbReference type="InParanoid" id="Q54J24"/>
<dbReference type="PRO" id="PR:Q54J24"/>
<dbReference type="Proteomes" id="UP000002195">
    <property type="component" value="Chromosome 5"/>
</dbReference>
<dbReference type="GO" id="GO:0016020">
    <property type="term" value="C:membrane"/>
    <property type="evidence" value="ECO:0007669"/>
    <property type="project" value="UniProtKB-SubCell"/>
</dbReference>
<accession>Q54J24</accession>
<comment type="subcellular location">
    <subcellularLocation>
        <location evidence="2">Membrane</location>
        <topology evidence="2">Single-pass membrane protein</topology>
    </subcellularLocation>
</comment>
<feature type="chain" id="PRO_0000346991" description="Uncharacterized transmembrane protein DDB_G0288365">
    <location>
        <begin position="1"/>
        <end position="53"/>
    </location>
</feature>
<feature type="transmembrane region" description="Helical" evidence="1">
    <location>
        <begin position="18"/>
        <end position="38"/>
    </location>
</feature>
<organism>
    <name type="scientific">Dictyostelium discoideum</name>
    <name type="common">Social amoeba</name>
    <dbReference type="NCBI Taxonomy" id="44689"/>
    <lineage>
        <taxon>Eukaryota</taxon>
        <taxon>Amoebozoa</taxon>
        <taxon>Evosea</taxon>
        <taxon>Eumycetozoa</taxon>
        <taxon>Dictyostelia</taxon>
        <taxon>Dictyosteliales</taxon>
        <taxon>Dictyosteliaceae</taxon>
        <taxon>Dictyostelium</taxon>
    </lineage>
</organism>
<gene>
    <name type="ORF">DDB_G0288365</name>
</gene>
<reference key="1">
    <citation type="journal article" date="2005" name="Nature">
        <title>The genome of the social amoeba Dictyostelium discoideum.</title>
        <authorList>
            <person name="Eichinger L."/>
            <person name="Pachebat J.A."/>
            <person name="Gloeckner G."/>
            <person name="Rajandream M.A."/>
            <person name="Sucgang R."/>
            <person name="Berriman M."/>
            <person name="Song J."/>
            <person name="Olsen R."/>
            <person name="Szafranski K."/>
            <person name="Xu Q."/>
            <person name="Tunggal B."/>
            <person name="Kummerfeld S."/>
            <person name="Madera M."/>
            <person name="Konfortov B.A."/>
            <person name="Rivero F."/>
            <person name="Bankier A.T."/>
            <person name="Lehmann R."/>
            <person name="Hamlin N."/>
            <person name="Davies R."/>
            <person name="Gaudet P."/>
            <person name="Fey P."/>
            <person name="Pilcher K."/>
            <person name="Chen G."/>
            <person name="Saunders D."/>
            <person name="Sodergren E.J."/>
            <person name="Davis P."/>
            <person name="Kerhornou A."/>
            <person name="Nie X."/>
            <person name="Hall N."/>
            <person name="Anjard C."/>
            <person name="Hemphill L."/>
            <person name="Bason N."/>
            <person name="Farbrother P."/>
            <person name="Desany B."/>
            <person name="Just E."/>
            <person name="Morio T."/>
            <person name="Rost R."/>
            <person name="Churcher C.M."/>
            <person name="Cooper J."/>
            <person name="Haydock S."/>
            <person name="van Driessche N."/>
            <person name="Cronin A."/>
            <person name="Goodhead I."/>
            <person name="Muzny D.M."/>
            <person name="Mourier T."/>
            <person name="Pain A."/>
            <person name="Lu M."/>
            <person name="Harper D."/>
            <person name="Lindsay R."/>
            <person name="Hauser H."/>
            <person name="James K.D."/>
            <person name="Quiles M."/>
            <person name="Madan Babu M."/>
            <person name="Saito T."/>
            <person name="Buchrieser C."/>
            <person name="Wardroper A."/>
            <person name="Felder M."/>
            <person name="Thangavelu M."/>
            <person name="Johnson D."/>
            <person name="Knights A."/>
            <person name="Loulseged H."/>
            <person name="Mungall K.L."/>
            <person name="Oliver K."/>
            <person name="Price C."/>
            <person name="Quail M.A."/>
            <person name="Urushihara H."/>
            <person name="Hernandez J."/>
            <person name="Rabbinowitsch E."/>
            <person name="Steffen D."/>
            <person name="Sanders M."/>
            <person name="Ma J."/>
            <person name="Kohara Y."/>
            <person name="Sharp S."/>
            <person name="Simmonds M.N."/>
            <person name="Spiegler S."/>
            <person name="Tivey A."/>
            <person name="Sugano S."/>
            <person name="White B."/>
            <person name="Walker D."/>
            <person name="Woodward J.R."/>
            <person name="Winckler T."/>
            <person name="Tanaka Y."/>
            <person name="Shaulsky G."/>
            <person name="Schleicher M."/>
            <person name="Weinstock G.M."/>
            <person name="Rosenthal A."/>
            <person name="Cox E.C."/>
            <person name="Chisholm R.L."/>
            <person name="Gibbs R.A."/>
            <person name="Loomis W.F."/>
            <person name="Platzer M."/>
            <person name="Kay R.R."/>
            <person name="Williams J.G."/>
            <person name="Dear P.H."/>
            <person name="Noegel A.A."/>
            <person name="Barrell B.G."/>
            <person name="Kuspa A."/>
        </authorList>
    </citation>
    <scope>NUCLEOTIDE SEQUENCE [LARGE SCALE GENOMIC DNA]</scope>
    <source>
        <strain>AX4</strain>
    </source>
</reference>